<gene>
    <name evidence="1" type="primary">purE</name>
    <name type="ordered locus">sll0901</name>
</gene>
<feature type="chain" id="PRO_0000074979" description="N5-carboxyaminoimidazole ribonucleotide mutase">
    <location>
        <begin position="1"/>
        <end position="176"/>
    </location>
</feature>
<feature type="binding site" evidence="1">
    <location>
        <position position="14"/>
    </location>
    <ligand>
        <name>substrate</name>
    </ligand>
</feature>
<feature type="binding site" evidence="1">
    <location>
        <position position="17"/>
    </location>
    <ligand>
        <name>substrate</name>
    </ligand>
</feature>
<feature type="binding site" evidence="1">
    <location>
        <position position="44"/>
    </location>
    <ligand>
        <name>substrate</name>
    </ligand>
</feature>
<accession>Q55498</accession>
<evidence type="ECO:0000255" key="1">
    <source>
        <dbReference type="HAMAP-Rule" id="MF_01929"/>
    </source>
</evidence>
<name>PURE_SYNY3</name>
<reference key="1">
    <citation type="journal article" date="1995" name="DNA Res.">
        <title>Sequence analysis of the genome of the unicellular cyanobacterium Synechocystis sp. strain PCC6803. I. Sequence features in the 1 Mb region from map positions 64% to 92% of the genome.</title>
        <authorList>
            <person name="Kaneko T."/>
            <person name="Tanaka A."/>
            <person name="Sato S."/>
            <person name="Kotani H."/>
            <person name="Sazuka T."/>
            <person name="Miyajima N."/>
            <person name="Sugiura M."/>
            <person name="Tabata S."/>
        </authorList>
    </citation>
    <scope>NUCLEOTIDE SEQUENCE [LARGE SCALE GENOMIC DNA]</scope>
    <source>
        <strain>ATCC 27184 / PCC 6803 / N-1</strain>
    </source>
</reference>
<reference key="2">
    <citation type="journal article" date="1996" name="DNA Res.">
        <title>Sequence analysis of the genome of the unicellular cyanobacterium Synechocystis sp. strain PCC6803. II. Sequence determination of the entire genome and assignment of potential protein-coding regions.</title>
        <authorList>
            <person name="Kaneko T."/>
            <person name="Sato S."/>
            <person name="Kotani H."/>
            <person name="Tanaka A."/>
            <person name="Asamizu E."/>
            <person name="Nakamura Y."/>
            <person name="Miyajima N."/>
            <person name="Hirosawa M."/>
            <person name="Sugiura M."/>
            <person name="Sasamoto S."/>
            <person name="Kimura T."/>
            <person name="Hosouchi T."/>
            <person name="Matsuno A."/>
            <person name="Muraki A."/>
            <person name="Nakazaki N."/>
            <person name="Naruo K."/>
            <person name="Okumura S."/>
            <person name="Shimpo S."/>
            <person name="Takeuchi C."/>
            <person name="Wada T."/>
            <person name="Watanabe A."/>
            <person name="Yamada M."/>
            <person name="Yasuda M."/>
            <person name="Tabata S."/>
        </authorList>
    </citation>
    <scope>NUCLEOTIDE SEQUENCE [LARGE SCALE GENOMIC DNA]</scope>
    <source>
        <strain>ATCC 27184 / PCC 6803 / Kazusa</strain>
    </source>
</reference>
<dbReference type="EC" id="5.4.99.18" evidence="1"/>
<dbReference type="EMBL" id="BA000022">
    <property type="protein sequence ID" value="BAA10848.1"/>
    <property type="molecule type" value="Genomic_DNA"/>
</dbReference>
<dbReference type="PIR" id="S76001">
    <property type="entry name" value="S76001"/>
</dbReference>
<dbReference type="SMR" id="Q55498"/>
<dbReference type="FunCoup" id="Q55498">
    <property type="interactions" value="327"/>
</dbReference>
<dbReference type="IntAct" id="Q55498">
    <property type="interactions" value="1"/>
</dbReference>
<dbReference type="STRING" id="1148.gene:10500354"/>
<dbReference type="PaxDb" id="1148-1001361"/>
<dbReference type="EnsemblBacteria" id="BAA10848">
    <property type="protein sequence ID" value="BAA10848"/>
    <property type="gene ID" value="BAA10848"/>
</dbReference>
<dbReference type="KEGG" id="syn:sll0901"/>
<dbReference type="eggNOG" id="COG0041">
    <property type="taxonomic scope" value="Bacteria"/>
</dbReference>
<dbReference type="InParanoid" id="Q55498"/>
<dbReference type="PhylomeDB" id="Q55498"/>
<dbReference type="UniPathway" id="UPA00074">
    <property type="reaction ID" value="UER00943"/>
</dbReference>
<dbReference type="Proteomes" id="UP000001425">
    <property type="component" value="Chromosome"/>
</dbReference>
<dbReference type="GO" id="GO:0034023">
    <property type="term" value="F:5-(carboxyamino)imidazole ribonucleotide mutase activity"/>
    <property type="evidence" value="ECO:0007669"/>
    <property type="project" value="UniProtKB-UniRule"/>
</dbReference>
<dbReference type="GO" id="GO:0006189">
    <property type="term" value="P:'de novo' IMP biosynthetic process"/>
    <property type="evidence" value="ECO:0007669"/>
    <property type="project" value="UniProtKB-UniRule"/>
</dbReference>
<dbReference type="FunFam" id="3.40.50.1970:FF:000013">
    <property type="entry name" value="Phosphoribosylaminoimidazole carboxylase"/>
    <property type="match status" value="1"/>
</dbReference>
<dbReference type="Gene3D" id="3.40.50.1970">
    <property type="match status" value="1"/>
</dbReference>
<dbReference type="HAMAP" id="MF_01929">
    <property type="entry name" value="PurE_classI"/>
    <property type="match status" value="1"/>
</dbReference>
<dbReference type="InterPro" id="IPR033747">
    <property type="entry name" value="PurE_ClassI"/>
</dbReference>
<dbReference type="InterPro" id="IPR000031">
    <property type="entry name" value="PurE_dom"/>
</dbReference>
<dbReference type="InterPro" id="IPR024694">
    <property type="entry name" value="PurE_prokaryotes"/>
</dbReference>
<dbReference type="NCBIfam" id="TIGR01162">
    <property type="entry name" value="purE"/>
    <property type="match status" value="1"/>
</dbReference>
<dbReference type="PANTHER" id="PTHR23046:SF2">
    <property type="entry name" value="PHOSPHORIBOSYLAMINOIMIDAZOLE CARBOXYLASE"/>
    <property type="match status" value="1"/>
</dbReference>
<dbReference type="PANTHER" id="PTHR23046">
    <property type="entry name" value="PHOSPHORIBOSYLAMINOIMIDAZOLE CARBOXYLASE CATALYTIC SUBUNIT"/>
    <property type="match status" value="1"/>
</dbReference>
<dbReference type="Pfam" id="PF00731">
    <property type="entry name" value="AIRC"/>
    <property type="match status" value="1"/>
</dbReference>
<dbReference type="PIRSF" id="PIRSF001338">
    <property type="entry name" value="AIR_carboxylase"/>
    <property type="match status" value="1"/>
</dbReference>
<dbReference type="SMART" id="SM01001">
    <property type="entry name" value="AIRC"/>
    <property type="match status" value="1"/>
</dbReference>
<dbReference type="SUPFAM" id="SSF52255">
    <property type="entry name" value="N5-CAIR mutase (phosphoribosylaminoimidazole carboxylase, PurE)"/>
    <property type="match status" value="1"/>
</dbReference>
<protein>
    <recommendedName>
        <fullName evidence="1">N5-carboxyaminoimidazole ribonucleotide mutase</fullName>
        <shortName evidence="1">N5-CAIR mutase</shortName>
        <ecNumber evidence="1">5.4.99.18</ecNumber>
    </recommendedName>
    <alternativeName>
        <fullName evidence="1">5-(carboxyamino)imidazole ribonucleotide mutase</fullName>
    </alternativeName>
</protein>
<comment type="function">
    <text evidence="1">Catalyzes the conversion of N5-carboxyaminoimidazole ribonucleotide (N5-CAIR) to 4-carboxy-5-aminoimidazole ribonucleotide (CAIR).</text>
</comment>
<comment type="catalytic activity">
    <reaction evidence="1">
        <text>5-carboxyamino-1-(5-phospho-D-ribosyl)imidazole + H(+) = 5-amino-1-(5-phospho-D-ribosyl)imidazole-4-carboxylate</text>
        <dbReference type="Rhea" id="RHEA:13193"/>
        <dbReference type="ChEBI" id="CHEBI:15378"/>
        <dbReference type="ChEBI" id="CHEBI:58730"/>
        <dbReference type="ChEBI" id="CHEBI:77657"/>
        <dbReference type="EC" id="5.4.99.18"/>
    </reaction>
</comment>
<comment type="pathway">
    <text evidence="1">Purine metabolism; IMP biosynthesis via de novo pathway; 5-amino-1-(5-phospho-D-ribosyl)imidazole-4-carboxylate from 5-amino-1-(5-phospho-D-ribosyl)imidazole (N5-CAIR route): step 2/2.</text>
</comment>
<comment type="similarity">
    <text evidence="1">Belongs to the AIR carboxylase family. Class I subfamily.</text>
</comment>
<keyword id="KW-0413">Isomerase</keyword>
<keyword id="KW-0658">Purine biosynthesis</keyword>
<keyword id="KW-1185">Reference proteome</keyword>
<organism>
    <name type="scientific">Synechocystis sp. (strain ATCC 27184 / PCC 6803 / Kazusa)</name>
    <dbReference type="NCBI Taxonomy" id="1111708"/>
    <lineage>
        <taxon>Bacteria</taxon>
        <taxon>Bacillati</taxon>
        <taxon>Cyanobacteriota</taxon>
        <taxon>Cyanophyceae</taxon>
        <taxon>Synechococcales</taxon>
        <taxon>Merismopediaceae</taxon>
        <taxon>Synechocystis</taxon>
    </lineage>
</organism>
<proteinExistence type="inferred from homology"/>
<sequence>MTSPSPLVGIIMGSDSDLPTMAAAIAVCEEFAVPTEVAIISAHRTPERMVEYAQTAHQRGLRIIIAGAGGAAHLPGMVAALTPLPVIGVPVQTKTLQGVDSLYSIVQMPGGIPVATVAIGNAKNAGLLAVQILASHNPVLLEKVQQYRQSLETMVLDKQAELERLGYRAYLDQQNQ</sequence>